<dbReference type="GO" id="GO:0005576">
    <property type="term" value="C:extracellular region"/>
    <property type="evidence" value="ECO:0007669"/>
    <property type="project" value="UniProtKB-SubCell"/>
</dbReference>
<dbReference type="GO" id="GO:0090729">
    <property type="term" value="F:toxin activity"/>
    <property type="evidence" value="ECO:0007669"/>
    <property type="project" value="UniProtKB-KW"/>
</dbReference>
<dbReference type="GO" id="GO:0042311">
    <property type="term" value="P:vasodilation"/>
    <property type="evidence" value="ECO:0007669"/>
    <property type="project" value="UniProtKB-KW"/>
</dbReference>
<keyword id="KW-0903">Direct protein sequencing</keyword>
<keyword id="KW-1213">G-protein coupled receptor impairing toxin</keyword>
<keyword id="KW-0964">Secreted</keyword>
<keyword id="KW-0800">Toxin</keyword>
<keyword id="KW-0838">Vasoactive</keyword>
<keyword id="KW-0840">Vasodilator</keyword>
<organism>
    <name type="scientific">Trichonephila clavipes</name>
    <name type="common">Golden silk orbweaver</name>
    <name type="synonym">Nephila clavipes</name>
    <dbReference type="NCBI Taxonomy" id="2585209"/>
    <lineage>
        <taxon>Eukaryota</taxon>
        <taxon>Metazoa</taxon>
        <taxon>Ecdysozoa</taxon>
        <taxon>Arthropoda</taxon>
        <taxon>Chelicerata</taxon>
        <taxon>Arachnida</taxon>
        <taxon>Araneae</taxon>
        <taxon>Araneomorphae</taxon>
        <taxon>Entelegynae</taxon>
        <taxon>Araneoidea</taxon>
        <taxon>Nephilidae</taxon>
        <taxon>Trichonephila</taxon>
    </lineage>
</organism>
<name>BRK_TRICX</name>
<comment type="function">
    <text evidence="1">Causes constriction on isolated rat ileum preparations and relaxation on rat duodenum muscle preparations at amounts higher than bradykinin. Targets bradykinin receptor B2 (BDKRB2). Has insecticidal properties. May be related to the predation of insects by the spider webs.</text>
</comment>
<comment type="subcellular location">
    <subcellularLocation>
        <location>Secreted</location>
    </subcellularLocation>
</comment>
<comment type="toxic dose">
    <text evidence="1">LD(50) is 54 pmoles/mg when injected into honeybees. Dose that causes muscle constriction (ED(50)) is 0.3 uM. Dose that causes muscle relaxation (ED(50)) is 0.2 uM.</text>
</comment>
<comment type="miscellaneous">
    <text evidence="3">Has been extracted from the spider web.</text>
</comment>
<comment type="similarity">
    <text evidence="2">Belongs to the bradykinin-related peptide family.</text>
</comment>
<protein>
    <recommendedName>
        <fullName>Bradykinin</fullName>
    </recommendedName>
</protein>
<evidence type="ECO:0000269" key="1">
    <source>
    </source>
</evidence>
<evidence type="ECO:0000305" key="2"/>
<evidence type="ECO:0000305" key="3">
    <source>
    </source>
</evidence>
<reference key="1">
    <citation type="journal article" date="2006" name="Peptides">
        <title>Multiple bradykinin-related peptides from the capture web of the spider Nephila clavipes (Araneae, Tetragnatidae).</title>
        <authorList>
            <person name="Volsi E.C."/>
            <person name="Mendes M.A."/>
            <person name="Marques M.R."/>
            <person name="dos Santos L.D."/>
            <person name="Santos K.S."/>
            <person name="de Souza B.M."/>
            <person name="Babieri E.F."/>
            <person name="Palma M.S."/>
        </authorList>
    </citation>
    <scope>PROTEIN SEQUENCE</scope>
    <scope>IDENTIFICATION BY MASS SPECTROMETRY</scope>
    <scope>SYNTHESIS</scope>
    <scope>FUNCTION</scope>
    <scope>BIOASSAY</scope>
    <scope>TOXIC DOSE</scope>
</reference>
<sequence>RPPGFSPFR</sequence>
<accession>P0DM76</accession>
<feature type="peptide" id="PRO_0000424408" description="Bradykinin">
    <location>
        <begin position="1"/>
        <end position="9"/>
    </location>
</feature>
<proteinExistence type="evidence at protein level"/>